<dbReference type="EC" id="2.3.1.-" evidence="7"/>
<dbReference type="EC" id="6.3.2.-" evidence="7"/>
<dbReference type="EMBL" id="MK425157">
    <property type="protein sequence ID" value="QBE85649.1"/>
    <property type="molecule type" value="Genomic_DNA"/>
</dbReference>
<dbReference type="SMR" id="A0A411L027"/>
<dbReference type="GO" id="GO:0004315">
    <property type="term" value="F:3-oxoacyl-[acyl-carrier-protein] synthase activity"/>
    <property type="evidence" value="ECO:0007669"/>
    <property type="project" value="InterPro"/>
</dbReference>
<dbReference type="GO" id="GO:0004312">
    <property type="term" value="F:fatty acid synthase activity"/>
    <property type="evidence" value="ECO:0007669"/>
    <property type="project" value="TreeGrafter"/>
</dbReference>
<dbReference type="GO" id="GO:0016874">
    <property type="term" value="F:ligase activity"/>
    <property type="evidence" value="ECO:0007669"/>
    <property type="project" value="UniProtKB-KW"/>
</dbReference>
<dbReference type="GO" id="GO:0008168">
    <property type="term" value="F:methyltransferase activity"/>
    <property type="evidence" value="ECO:0007669"/>
    <property type="project" value="UniProtKB-KW"/>
</dbReference>
<dbReference type="GO" id="GO:0016491">
    <property type="term" value="F:oxidoreductase activity"/>
    <property type="evidence" value="ECO:0007669"/>
    <property type="project" value="UniProtKB-KW"/>
</dbReference>
<dbReference type="GO" id="GO:0031177">
    <property type="term" value="F:phosphopantetheine binding"/>
    <property type="evidence" value="ECO:0007669"/>
    <property type="project" value="InterPro"/>
</dbReference>
<dbReference type="GO" id="GO:0017000">
    <property type="term" value="P:antibiotic biosynthetic process"/>
    <property type="evidence" value="ECO:0007669"/>
    <property type="project" value="UniProtKB-KW"/>
</dbReference>
<dbReference type="GO" id="GO:0006633">
    <property type="term" value="P:fatty acid biosynthetic process"/>
    <property type="evidence" value="ECO:0007669"/>
    <property type="project" value="InterPro"/>
</dbReference>
<dbReference type="GO" id="GO:0032259">
    <property type="term" value="P:methylation"/>
    <property type="evidence" value="ECO:0007669"/>
    <property type="project" value="UniProtKB-KW"/>
</dbReference>
<dbReference type="GO" id="GO:0009403">
    <property type="term" value="P:toxin biosynthetic process"/>
    <property type="evidence" value="ECO:0007669"/>
    <property type="project" value="UniProtKB-ARBA"/>
</dbReference>
<dbReference type="CDD" id="cd05930">
    <property type="entry name" value="A_NRPS"/>
    <property type="match status" value="1"/>
</dbReference>
<dbReference type="CDD" id="cd02440">
    <property type="entry name" value="AdoMet_MTases"/>
    <property type="match status" value="1"/>
</dbReference>
<dbReference type="CDD" id="cd19532">
    <property type="entry name" value="C_PKS-NRPS"/>
    <property type="match status" value="1"/>
</dbReference>
<dbReference type="CDD" id="cd00833">
    <property type="entry name" value="PKS"/>
    <property type="match status" value="1"/>
</dbReference>
<dbReference type="FunFam" id="3.40.47.10:FF:000019">
    <property type="entry name" value="Polyketide synthase type I"/>
    <property type="match status" value="1"/>
</dbReference>
<dbReference type="Gene3D" id="3.30.300.30">
    <property type="match status" value="1"/>
</dbReference>
<dbReference type="Gene3D" id="3.40.47.10">
    <property type="match status" value="1"/>
</dbReference>
<dbReference type="Gene3D" id="1.10.1200.10">
    <property type="entry name" value="ACP-like"/>
    <property type="match status" value="2"/>
</dbReference>
<dbReference type="Gene3D" id="3.30.559.10">
    <property type="entry name" value="Chloramphenicol acetyltransferase-like domain"/>
    <property type="match status" value="1"/>
</dbReference>
<dbReference type="Gene3D" id="3.40.366.10">
    <property type="entry name" value="Malonyl-Coenzyme A Acyl Carrier Protein, domain 2"/>
    <property type="match status" value="1"/>
</dbReference>
<dbReference type="Gene3D" id="3.40.50.12780">
    <property type="entry name" value="N-terminal domain of ligase-like"/>
    <property type="match status" value="1"/>
</dbReference>
<dbReference type="Gene3D" id="3.40.50.720">
    <property type="entry name" value="NAD(P)-binding Rossmann-like Domain"/>
    <property type="match status" value="2"/>
</dbReference>
<dbReference type="Gene3D" id="3.30.559.30">
    <property type="entry name" value="Nonribosomal peptide synthetase, condensation domain"/>
    <property type="match status" value="1"/>
</dbReference>
<dbReference type="Gene3D" id="3.10.129.110">
    <property type="entry name" value="Polyketide synthase dehydratase"/>
    <property type="match status" value="1"/>
</dbReference>
<dbReference type="Gene3D" id="3.40.50.150">
    <property type="entry name" value="Vaccinia Virus protein VP39"/>
    <property type="match status" value="1"/>
</dbReference>
<dbReference type="InterPro" id="IPR010071">
    <property type="entry name" value="AA_adenyl_dom"/>
</dbReference>
<dbReference type="InterPro" id="IPR001227">
    <property type="entry name" value="Ac_transferase_dom_sf"/>
</dbReference>
<dbReference type="InterPro" id="IPR036736">
    <property type="entry name" value="ACP-like_sf"/>
</dbReference>
<dbReference type="InterPro" id="IPR014043">
    <property type="entry name" value="Acyl_transferase_dom"/>
</dbReference>
<dbReference type="InterPro" id="IPR016035">
    <property type="entry name" value="Acyl_Trfase/lysoPLipase"/>
</dbReference>
<dbReference type="InterPro" id="IPR045851">
    <property type="entry name" value="AMP-bd_C_sf"/>
</dbReference>
<dbReference type="InterPro" id="IPR020845">
    <property type="entry name" value="AMP-binding_CS"/>
</dbReference>
<dbReference type="InterPro" id="IPR000873">
    <property type="entry name" value="AMP-dep_synth/lig_dom"/>
</dbReference>
<dbReference type="InterPro" id="IPR042099">
    <property type="entry name" value="ANL_N_sf"/>
</dbReference>
<dbReference type="InterPro" id="IPR023213">
    <property type="entry name" value="CAT-like_dom_sf"/>
</dbReference>
<dbReference type="InterPro" id="IPR001242">
    <property type="entry name" value="Condensatn"/>
</dbReference>
<dbReference type="InterPro" id="IPR013120">
    <property type="entry name" value="Far_NAD-bd"/>
</dbReference>
<dbReference type="InterPro" id="IPR018201">
    <property type="entry name" value="Ketoacyl_synth_AS"/>
</dbReference>
<dbReference type="InterPro" id="IPR014031">
    <property type="entry name" value="Ketoacyl_synth_C"/>
</dbReference>
<dbReference type="InterPro" id="IPR014030">
    <property type="entry name" value="Ketoacyl_synth_N"/>
</dbReference>
<dbReference type="InterPro" id="IPR016036">
    <property type="entry name" value="Malonyl_transacylase_ACP-bd"/>
</dbReference>
<dbReference type="InterPro" id="IPR013217">
    <property type="entry name" value="Methyltransf_12"/>
</dbReference>
<dbReference type="InterPro" id="IPR036291">
    <property type="entry name" value="NAD(P)-bd_dom_sf"/>
</dbReference>
<dbReference type="InterPro" id="IPR032821">
    <property type="entry name" value="PKS_assoc"/>
</dbReference>
<dbReference type="InterPro" id="IPR020841">
    <property type="entry name" value="PKS_Beta-ketoAc_synthase_dom"/>
</dbReference>
<dbReference type="InterPro" id="IPR042104">
    <property type="entry name" value="PKS_dehydratase_sf"/>
</dbReference>
<dbReference type="InterPro" id="IPR020807">
    <property type="entry name" value="PKS_DH"/>
</dbReference>
<dbReference type="InterPro" id="IPR049551">
    <property type="entry name" value="PKS_DH_C"/>
</dbReference>
<dbReference type="InterPro" id="IPR049552">
    <property type="entry name" value="PKS_DH_N"/>
</dbReference>
<dbReference type="InterPro" id="IPR013968">
    <property type="entry name" value="PKS_KR"/>
</dbReference>
<dbReference type="InterPro" id="IPR049900">
    <property type="entry name" value="PKS_mFAS_DH"/>
</dbReference>
<dbReference type="InterPro" id="IPR050091">
    <property type="entry name" value="PKS_NRPS_Biosynth_Enz"/>
</dbReference>
<dbReference type="InterPro" id="IPR020806">
    <property type="entry name" value="PKS_PP-bd"/>
</dbReference>
<dbReference type="InterPro" id="IPR009081">
    <property type="entry name" value="PP-bd_ACP"/>
</dbReference>
<dbReference type="InterPro" id="IPR006162">
    <property type="entry name" value="Ppantetheine_attach_site"/>
</dbReference>
<dbReference type="InterPro" id="IPR029063">
    <property type="entry name" value="SAM-dependent_MTases_sf"/>
</dbReference>
<dbReference type="InterPro" id="IPR016039">
    <property type="entry name" value="Thiolase-like"/>
</dbReference>
<dbReference type="NCBIfam" id="TIGR01733">
    <property type="entry name" value="AA-adenyl-dom"/>
    <property type="match status" value="1"/>
</dbReference>
<dbReference type="PANTHER" id="PTHR43775">
    <property type="entry name" value="FATTY ACID SYNTHASE"/>
    <property type="match status" value="1"/>
</dbReference>
<dbReference type="PANTHER" id="PTHR43775:SF20">
    <property type="entry name" value="HYBRID PKS-NRPS SYNTHETASE APDA"/>
    <property type="match status" value="1"/>
</dbReference>
<dbReference type="Pfam" id="PF00698">
    <property type="entry name" value="Acyl_transf_1"/>
    <property type="match status" value="1"/>
</dbReference>
<dbReference type="Pfam" id="PF00501">
    <property type="entry name" value="AMP-binding"/>
    <property type="match status" value="1"/>
</dbReference>
<dbReference type="Pfam" id="PF00668">
    <property type="entry name" value="Condensation"/>
    <property type="match status" value="1"/>
</dbReference>
<dbReference type="Pfam" id="PF16197">
    <property type="entry name" value="KAsynt_C_assoc"/>
    <property type="match status" value="1"/>
</dbReference>
<dbReference type="Pfam" id="PF00109">
    <property type="entry name" value="ketoacyl-synt"/>
    <property type="match status" value="1"/>
</dbReference>
<dbReference type="Pfam" id="PF02801">
    <property type="entry name" value="Ketoacyl-synt_C"/>
    <property type="match status" value="1"/>
</dbReference>
<dbReference type="Pfam" id="PF08659">
    <property type="entry name" value="KR"/>
    <property type="match status" value="1"/>
</dbReference>
<dbReference type="Pfam" id="PF08242">
    <property type="entry name" value="Methyltransf_12"/>
    <property type="match status" value="1"/>
</dbReference>
<dbReference type="Pfam" id="PF07993">
    <property type="entry name" value="NAD_binding_4"/>
    <property type="match status" value="1"/>
</dbReference>
<dbReference type="Pfam" id="PF21089">
    <property type="entry name" value="PKS_DH_N"/>
    <property type="match status" value="1"/>
</dbReference>
<dbReference type="Pfam" id="PF00550">
    <property type="entry name" value="PP-binding"/>
    <property type="match status" value="2"/>
</dbReference>
<dbReference type="Pfam" id="PF14765">
    <property type="entry name" value="PS-DH"/>
    <property type="match status" value="1"/>
</dbReference>
<dbReference type="SMART" id="SM00827">
    <property type="entry name" value="PKS_AT"/>
    <property type="match status" value="1"/>
</dbReference>
<dbReference type="SMART" id="SM00826">
    <property type="entry name" value="PKS_DH"/>
    <property type="match status" value="1"/>
</dbReference>
<dbReference type="SMART" id="SM00822">
    <property type="entry name" value="PKS_KR"/>
    <property type="match status" value="1"/>
</dbReference>
<dbReference type="SMART" id="SM00825">
    <property type="entry name" value="PKS_KS"/>
    <property type="match status" value="1"/>
</dbReference>
<dbReference type="SMART" id="SM00823">
    <property type="entry name" value="PKS_PP"/>
    <property type="match status" value="2"/>
</dbReference>
<dbReference type="SUPFAM" id="SSF56801">
    <property type="entry name" value="Acetyl-CoA synthetase-like"/>
    <property type="match status" value="1"/>
</dbReference>
<dbReference type="SUPFAM" id="SSF47336">
    <property type="entry name" value="ACP-like"/>
    <property type="match status" value="2"/>
</dbReference>
<dbReference type="SUPFAM" id="SSF52777">
    <property type="entry name" value="CoA-dependent acyltransferases"/>
    <property type="match status" value="2"/>
</dbReference>
<dbReference type="SUPFAM" id="SSF52151">
    <property type="entry name" value="FabD/lysophospholipase-like"/>
    <property type="match status" value="1"/>
</dbReference>
<dbReference type="SUPFAM" id="SSF51735">
    <property type="entry name" value="NAD(P)-binding Rossmann-fold domains"/>
    <property type="match status" value="2"/>
</dbReference>
<dbReference type="SUPFAM" id="SSF55048">
    <property type="entry name" value="Probable ACP-binding domain of malonyl-CoA ACP transacylase"/>
    <property type="match status" value="1"/>
</dbReference>
<dbReference type="SUPFAM" id="SSF53335">
    <property type="entry name" value="S-adenosyl-L-methionine-dependent methyltransferases"/>
    <property type="match status" value="1"/>
</dbReference>
<dbReference type="SUPFAM" id="SSF53901">
    <property type="entry name" value="Thiolase-like"/>
    <property type="match status" value="1"/>
</dbReference>
<dbReference type="PROSITE" id="PS00455">
    <property type="entry name" value="AMP_BINDING"/>
    <property type="match status" value="1"/>
</dbReference>
<dbReference type="PROSITE" id="PS50075">
    <property type="entry name" value="CARRIER"/>
    <property type="match status" value="2"/>
</dbReference>
<dbReference type="PROSITE" id="PS00606">
    <property type="entry name" value="KS3_1"/>
    <property type="match status" value="1"/>
</dbReference>
<dbReference type="PROSITE" id="PS52004">
    <property type="entry name" value="KS3_2"/>
    <property type="match status" value="1"/>
</dbReference>
<dbReference type="PROSITE" id="PS00012">
    <property type="entry name" value="PHOSPHOPANTETHEINE"/>
    <property type="match status" value="1"/>
</dbReference>
<dbReference type="PROSITE" id="PS52019">
    <property type="entry name" value="PKS_MFAS_DH"/>
    <property type="match status" value="1"/>
</dbReference>
<gene>
    <name evidence="8" type="primary">buaA</name>
</gene>
<feature type="chain" id="PRO_0000448729" description="Hybrid PKS-NRPS synthetase buaA">
    <location>
        <begin position="1"/>
        <end position="3987"/>
    </location>
</feature>
<feature type="domain" description="Ketosynthase family 3 (KS3)" evidence="4">
    <location>
        <begin position="5"/>
        <end position="438"/>
    </location>
</feature>
<feature type="domain" description="PKS/mFAS DH" evidence="5">
    <location>
        <begin position="939"/>
        <end position="1240"/>
    </location>
</feature>
<feature type="domain" description="Carrier 1" evidence="3">
    <location>
        <begin position="2397"/>
        <end position="2473"/>
    </location>
</feature>
<feature type="domain" description="Carrier 2" evidence="3">
    <location>
        <begin position="3564"/>
        <end position="3644"/>
    </location>
</feature>
<feature type="region of interest" description="Malonyl-CoA:ACP transacylase (MAT) domain" evidence="2">
    <location>
        <begin position="546"/>
        <end position="872"/>
    </location>
</feature>
<feature type="region of interest" description="N-terminal hotdog fold" evidence="5">
    <location>
        <begin position="939"/>
        <end position="1072"/>
    </location>
</feature>
<feature type="region of interest" description="Dehydratase (DH) domain" evidence="2">
    <location>
        <begin position="940"/>
        <end position="1238"/>
    </location>
</feature>
<feature type="region of interest" description="C-terminal hotdog fold" evidence="5">
    <location>
        <begin position="1087"/>
        <end position="1240"/>
    </location>
</feature>
<feature type="region of interest" description="Methyltransferase (MT) domain" evidence="2">
    <location>
        <begin position="1399"/>
        <end position="1583"/>
    </location>
</feature>
<feature type="region of interest" description="Ketoreductase (KR) domain" evidence="2">
    <location>
        <begin position="2113"/>
        <end position="2285"/>
    </location>
</feature>
<feature type="region of interest" description="Disordered" evidence="6">
    <location>
        <begin position="2489"/>
        <end position="2561"/>
    </location>
</feature>
<feature type="region of interest" description="Condensation (C) domain" evidence="2">
    <location>
        <begin position="2582"/>
        <end position="3001"/>
    </location>
</feature>
<feature type="region of interest" description="Adenylation (A) (KR) domain" evidence="2">
    <location>
        <begin position="3042"/>
        <end position="3448"/>
    </location>
</feature>
<feature type="region of interest" description="Reductase (R) domain" evidence="2">
    <location>
        <begin position="3680"/>
        <end position="3916"/>
    </location>
</feature>
<feature type="compositionally biased region" description="Basic and acidic residues" evidence="6">
    <location>
        <begin position="2514"/>
        <end position="2525"/>
    </location>
</feature>
<feature type="compositionally biased region" description="Low complexity" evidence="6">
    <location>
        <begin position="2532"/>
        <end position="2550"/>
    </location>
</feature>
<feature type="active site" description="For beta-ketoacyl synthase activity" evidence="4">
    <location>
        <position position="176"/>
    </location>
</feature>
<feature type="active site" description="For beta-ketoacyl synthase activity" evidence="4">
    <location>
        <position position="315"/>
    </location>
</feature>
<feature type="active site" description="For beta-ketoacyl synthase activity" evidence="4">
    <location>
        <position position="358"/>
    </location>
</feature>
<feature type="active site" description="Proton acceptor; for dehydratase activity" evidence="5">
    <location>
        <position position="970"/>
    </location>
</feature>
<feature type="active site" description="Proton donor; for dehydratase activity" evidence="5">
    <location>
        <position position="1147"/>
    </location>
</feature>
<feature type="modified residue" description="O-(pantetheine 4'-phosphoryl)serine" evidence="3">
    <location>
        <position position="2433"/>
    </location>
</feature>
<feature type="modified residue" description="O-(pantetheine 4'-phosphoryl)serine" evidence="3">
    <location>
        <position position="3604"/>
    </location>
</feature>
<organism>
    <name type="scientific">Petromyces alliaceus</name>
    <name type="common">Aspergillus alliaceus</name>
    <dbReference type="NCBI Taxonomy" id="209559"/>
    <lineage>
        <taxon>Eukaryota</taxon>
        <taxon>Fungi</taxon>
        <taxon>Dikarya</taxon>
        <taxon>Ascomycota</taxon>
        <taxon>Pezizomycotina</taxon>
        <taxon>Eurotiomycetes</taxon>
        <taxon>Eurotiomycetidae</taxon>
        <taxon>Eurotiales</taxon>
        <taxon>Aspergillaceae</taxon>
        <taxon>Aspergillus</taxon>
        <taxon>Aspergillus subgen. Circumdati</taxon>
    </lineage>
</organism>
<name>BUAA_PETAA</name>
<sequence>MAPQNEPIAIVGSGCRFPGEASSPSKLWDLLREPRDVLSKIDRFSADGFYNKDGHHHGSSNVLHSYQLSEDTRSFDAQFFNIPASEAESMDPQQRFIMEVVYEALESAAIKIEELSGSPTAVYVGVMCNDYAHITYADLESVPKYAATGTALSILANRISYFFNWTGPSMTIDTACSSSLVALHHAVQTLRGGTSKVAVAAGTNLIFTPTNYIAESNVNMLSPTGRSRMWDANADGYARGEGVAAVVLKTLSQAVADGDRIECVIRETGLNQDGRTPGITMPSSVAQAELIRSTYARAGLDVTRESDRPQFFEAHGTGTKAGDPEEAKAIYKAFFGQEDTMDARDTLYVGSIKTIIGHTEGTAGLAGLLKASLAVQNKTLPPNMHFHTLNPDIEPYYGKLQILTSVKPWPALASGVPRRVSVNSFGFGGANAHAIVESYEPSNGAIKVQSSKETAIPFTFSGYSEKSLMSQLTSFLEYLDSHPEPRLRDSAWTLSRRSAFSTRTTVSGTSIERLQEKLQSKIDSKIKDGKALGIRSSSKNDKILGVFTGQGAQWPRMGLRLLQSSATARRIFDDLERSLAELPTEDRPSWSLVQELEREAEDSRVMEAEFSQVLCTAVQVMLVDLLHSVGVSFDIVVGHSSGEIGAAYSAGYLSARDAIRIAYYRGKFGKLACGRDGVAGGMLAAGTDMADAKDLCELDDFVGRLQLAASNSSSSVTLSGDAEAVAWAQFVLEDEKKFARLLKVDTAYHSYHMQPCAEPYIEAMKRAGIQALKPQSDCRWFSSVLEGQEVSAAMSASLANSYWRDNLLQPVMFSQALEQAVSNTSDIGLVLEVGPHAALRGPATLTINDKLGRDVPYFGLLSRNADDVESFSDGIGAVWASLARCVIDFTRVDALLADGPEDQPRLCDNVPGYSWDHQRTYWMESRSSAALRLRPAAHHELLGVRVDSLNREYRWRNFIKPSQLSWTRGHQVQSQLIFPGAGFSVMALEAAKALAPAEKIALVELTDMQVLRAMAFQDENTAVEVICSLSNVIEDPDQANLTANFTCDMCLSKESGFVMAACGAVRLQLGAASSQLLPERTACPVRMNDVNIEHFYSTLWSLGYNYTDMFRSITSLQRTTDAASGIIHTTTEPDYTTSLTLHPATLDVAFQGIFGAMGAPGDGRLWTVLVPTRIKRITINPAVCGGTSGLGVDLPFDASVSVSPIDGVAGDVDIFDSTGVNKAVQVEGLQVAPLVPVTQSDDREVFSDTIWNFQEPDAARDVPKWTLTDEEWEHARYVERACFYYLKQLHDTITAEERDRCEWHPRKMLDWATEVVGVVSRGEHPIIRQEWMNDTWEMLKGPLDELTAKYEDFESLTHVGKNLIPFVKGEFSLLELVRNGGLLEHIYRNTYAFCEYNNYLANLVKQLSHRFPRMDIFEIGAGTGSTTEAVLRGIGDHYSSYTYTDLSAGFFPNAQETFKEHDAKMIYKIYDAEKEPGKQGYTERTYDLVIASNVLHATHSLETTLTNARKLLKPGGYLVMLEVTDVNPLRPTFFFGCLPGWWVGENDGRPHHPLVTKERWGELFDRTGFSGLDTSTPSHDVFMAPFSVMLTQAVDRQMALIRQPLQEDNRTTIDHLLILGGTGFTSFMLIEDVKHQLKRYAKHVIVVETLEALEASHFHSRQMLLSLVELDAPVFSPFTPERFAALQMLTEKCRNVLWVVRGASGEQPYANMMNGVARCLVGEQPDMRFQFVDFDMADKVDAGFIVRSLLQLQISDAWHTFIEPYRPVWTLEREVRYIQGQAHIPRYSPSLRRNLQYNSWRRTIRETVDPSSKYVILTHANGYYDLEEDNSPRPDPMAEDDRMAINVSRSSTVAVEIDGIGHLYILTGECELSGQRVLAFSSHNASRVQVKKDWVVSIGILSSDEPALIQMVTNVCLGTMLLNQTPRNGSLLVYEPTVALARILTALTSAEEPGRVLFTTTNRAKLDSGVAFSFIHPSSPDSSIARWVPAGVAGFVDASGGRKEQNMAARFARHLSSQCRVISMEGFYSNSSHQWGNAGGNSLSALLQHSTGLFTQGYKQCKQNQVQELSLDDVIGASTEHKEIRILNWKSQSKALVKLSPVQDEITFKGDRTYLLVGLTGELGRSLCRWMVQRGARYVVLTSRKPDVEPAWLELMQSYGAHIEVMAMDATDRKSTYNTVRKVQQTLPPVAGVGNGAMVLNDGLFNVISHQDFNQTLRPKVDGTTYLNELFQSPDLDFFIVFSSLAYVTGNFGQTSYAAANAFMASLVEGRKRRGLPGSVMNLAGIFGLGYITRTDRSILERLGKLGYANISEYDFHQFFAEAVLSGVPGSGRCHEISSALRPIDPDGETNPPAWLDMPRLSYYRHTKHAFTESGDTKSLSVRSQLKEQTTMEDVQRVLTNGLILTLYKQLGLDPEDDAISPDTSLVELGIDSLVAVDMRVWFTKELDLDMPVLKLLGGATVAAMVEDTMERMSPDLIPNVAQKDVTVAADRPSAPSDGVPAVGRSTAVSTTEHNSEEQESHAMETQELDESTTSGGECSSTKESSSSEATPPPSSVMSEDLAKVEETASIDGPKYVRKVKMGYGSLQFFFLVKHLDDPTVLNMQFRLPLQGSIKIPDLKYAVKMLGQRHEALRTAFFVDAENDDEPTQGVLETSPLQLETMQVTDSKEARRVCEDVQKYVFNIESGETIRILLLSITPSSHWLVLSFHHISIDGFSFNILLDEINALYQGQHLPPVKTQFTDVMCKQRQDLQAGFRRSELAYWQQVLGKIPDPIPLFPVAKLSSRLPVTRYHFEEAPMASIDAATAEQIRKQCRALKATRFHFFMTVLRIFLFAFLDTDELCIGFADASRADSGVSRTVGYLVNMLSLKFQRKPSQTFAQKVEEARKQSYAALANSTVPFNALLEKLEPPRSAAYTPVFQVFMDYLQHKFTAPKGLGVVEEQVYAHLTHNFFDLAVDINDVSASEILVRFRMQQYLYSASSVSLLLKSYVQLVKMCAYMEPNKAIGEPVPYDAQDIERAISLGQGPVVSSQWPSTPIERILDVAQARPEAPALVDGEGARLSYMEMIDRAHSIAGCLLTAGVAEGSTVGVYQEPTADSICSLLAIWIIGAVYLPLDRRVPCSRLSSIVQDCQPSAILCHERTLSDTPYLEATKQTAIITVPVNVAGIEAAPVPLNTGNGDQTSIILYTSGSTGVPKGLPIRHVSLLNQIEAMTTTFGVGAEMVLQQSAPSFDVSMQQILMALCNGGALYVVPNETRLDPVTITRLIASEKITWVHATPSEFTQWLRHGSAHLRAAKDWKFAFSSGEALSSDLVKGFEALRRPDVKLINVYGPAEAGVITGTEIDTTHVSAEPRSPISLGSPLANIAVYVVDRNLRPVPVGVSGEIVVAGAGNISGYLNRFELTAKLFLPDTITPRGYYPGQLATLYRSGDIGRYSPDGQLYYEGRIAGDTQVKLNGIRIDLKDVESAILETSGGEIVNAIVTDRRSPDFLVAHVELKADFPEAERKNFLTYIQQCLPLPKYMCPAMFIPLDHVPLNSHGKLDRRAIAARPLPTVDGDDQQGDADLSETELALRELWTGCLPEDVVKLTSISATTDFFHLGGNSYLLVRLQRLIRDRFNVSVPVMALYDASTLMAMALKIRNSQSLAVIDWDTETSVAQSLGASPCAEQPTAPRKTTDLTVVLTGATGYLGSRIMKALIASEQVSQIHCVAVRGHSAGVPRELAHSSDKLILHGGHLEDPLLGMSEEEFTFVARETDLVIHSGANRSFWDHYERLRGPNVLSTKTLVDLALQNQAPLHFISSGGVHLLCSGEDYAAESLASYLPPTDGSNGYIASKWASEVYLEKAAQKTSLPVYVHRLTPAPDVTPDAPMELLEEMSALAVKLQALPAPSGWTGTFDLTPAEALATGIAAAAVGAQAPMLESHQSARFIHHPSQVKMTMDHVAKYLDMLPSAEGFERLPPLQWAGRAKREGLTWHFSSTDFITMGG</sequence>
<comment type="function">
    <text evidence="7">Hybrid PKS-NRPS synthetase; part of the gene cluster that mediates the biosynthesis of burnettramic acids, an unusual class of bolaamphiphilic pyrrolizidinediones that display potent antibacterial, antifungal, and cytotoxic activities (PubMed:30735051). The first step of the biosynthesis of burnettramic acids is the hydroxylation of proline by the proline hydroxylase buaE to generate 4-hydroxyproline (PubMed:30735051). The PKS-NRPS buaA and trans-enoyl reductase buaC construct the highly reduced polyketide chain, and the condensation (C) domain of buaA then catalyzes the amide bond formation with the activated 4-hydroxyproline (PubMed:30735051). This is followed by the R domain releasing the nascent polyketide-peptide directly via a Dieckmann condensation to afford a tetramic acid fused to the hydroxyproline, generating the bicyclic pyrrolidinedione moiety (PubMed:30735051). The cytochrome P450 monooxygenases buaD and buaG are likely responsible for the multiple hydroxylations on the polyketide chain and its terminus, although in a heterologous context, buaD does not appear to be required. Therefore, while buaG may be a multifunctional cytochrome P450 monooxygenase, it cannot be ruled out that the two secondary alcohols on the polyketide chain could have an acetate origin (PubMed:30735051). Finally, the glycosyltransferase buaB transfers beta-D-mannose to the aglycone burnettramic acid A to form burnettramic acid A (PubMed:30735051). Burnettramic acid B is a minor cis-pyrrolizidine epimer of burnettramic acid A and it is likely that small amounts of it form naturally in acidic environments (PubMed:30735051).</text>
</comment>
<comment type="pathway">
    <text evidence="7">Mycotoxin biosynthesis.</text>
</comment>
<comment type="domain">
    <text evidence="1 10">NRP synthetases are composed of discrete domains (adenylation (A), thiolation (T) or peptidyl carrier protein (PCP) and condensation (C) domains) which when grouped together are referred to as a single module. Each module is responsible for the recognition (via the A domain) and incorporation of a single amino acid into the growing peptide product. Thus, an NRP synthetase is generally composed of one or more modules and can terminate in a thioesterase domain (TE) that releases the newly synthesized peptide from the enzyme. Occasionally, epimerase (E) domains (responsible for L- to D-amino acid conversion) are present within the NRP synthetase (By similarity). BuaA contains also a polyketide synthase module (PKS) consisting of several catalytic domains including a ketoacyl synthase domain (KS), an acyl transferase domain (AT), a dehydratase domain (DH), a methyltransferase domain (MT), and a ketoreductase domain (KR) (Probable). Instead of a thioesterase domain (TE), buaA finishes with a reductase-like domain (R) for peptide release. BuaA has the following architecture: KS-AT-DH-KR-PCP-C-A-T-R (Probable).</text>
</comment>
<comment type="similarity">
    <text evidence="9">In the C-terminal section; belongs to the NRP synthetase family.</text>
</comment>
<protein>
    <recommendedName>
        <fullName evidence="8">Hybrid PKS-NRPS synthetase buaA</fullName>
        <ecNumber evidence="7">2.3.1.-</ecNumber>
        <ecNumber evidence="7">6.3.2.-</ecNumber>
    </recommendedName>
    <alternativeName>
        <fullName evidence="8">Burnettramic acids biosynthesis cluster protein A</fullName>
    </alternativeName>
</protein>
<proteinExistence type="inferred from homology"/>
<accession>A0A411L027</accession>
<keyword id="KW-0045">Antibiotic biosynthesis</keyword>
<keyword id="KW-0436">Ligase</keyword>
<keyword id="KW-0489">Methyltransferase</keyword>
<keyword id="KW-0511">Multifunctional enzyme</keyword>
<keyword id="KW-0560">Oxidoreductase</keyword>
<keyword id="KW-0596">Phosphopantetheine</keyword>
<keyword id="KW-0597">Phosphoprotein</keyword>
<keyword id="KW-0677">Repeat</keyword>
<keyword id="KW-0808">Transferase</keyword>
<evidence type="ECO:0000250" key="1">
    <source>
        <dbReference type="UniProtKB" id="Q4WAZ9"/>
    </source>
</evidence>
<evidence type="ECO:0000255" key="2"/>
<evidence type="ECO:0000255" key="3">
    <source>
        <dbReference type="PROSITE-ProRule" id="PRU00258"/>
    </source>
</evidence>
<evidence type="ECO:0000255" key="4">
    <source>
        <dbReference type="PROSITE-ProRule" id="PRU01348"/>
    </source>
</evidence>
<evidence type="ECO:0000255" key="5">
    <source>
        <dbReference type="PROSITE-ProRule" id="PRU01363"/>
    </source>
</evidence>
<evidence type="ECO:0000256" key="6">
    <source>
        <dbReference type="SAM" id="MobiDB-lite"/>
    </source>
</evidence>
<evidence type="ECO:0000269" key="7">
    <source>
    </source>
</evidence>
<evidence type="ECO:0000303" key="8">
    <source>
    </source>
</evidence>
<evidence type="ECO:0000305" key="9"/>
<evidence type="ECO:0000305" key="10">
    <source>
    </source>
</evidence>
<reference key="1">
    <citation type="journal article" date="2019" name="Org. Lett.">
        <title>Discovery and Heterologous Biosynthesis of the Burnettramic Acids: Rare PKS-NRPS-Derived Bolaamphiphilic Pyrrolizidinediones from an Australian Fungus, Aspergillus burnettii.</title>
        <authorList>
            <person name="Li H."/>
            <person name="Gilchrist C.L.M."/>
            <person name="Lacey H.J."/>
            <person name="Crombie A."/>
            <person name="Vuong D."/>
            <person name="Pitt J.I."/>
            <person name="Lacey E."/>
            <person name="Chooi Y.H."/>
            <person name="Piggott A.M."/>
        </authorList>
    </citation>
    <scope>NUCLEOTIDE SEQUENCE [GENOMIC DNA]</scope>
    <scope>FUNCTION</scope>
    <scope>DOMAIN</scope>
    <scope>PATHWAY</scope>
    <source>
        <strain>FRR 5400</strain>
    </source>
</reference>